<sequence>MKVLNLGSKKQASFYVACELYKEMAFNQHCKLGLATGGTMTDLYEQLVKLLNKNQLNVDNVSTFNLDEYVGLTASHPQSYHYYMDDMLFKQYPYFNRKNIHIPNGDADDMNAEASKYNDVLEQQGQRDIQILGIGENGHIGFNEPGTPFDSVTHIVDLTESTIKANSRYFKNEDDVPKQAISMGLANILQAKRIILLAFGEKKRAAITHLLNQEISVDVPATLLHKHPNVEIYLDDEACPKNVAKIHVDEMD</sequence>
<gene>
    <name evidence="1" type="primary">nagB</name>
    <name type="ordered locus">SAUSA300_0554</name>
</gene>
<dbReference type="EC" id="3.5.99.6" evidence="1"/>
<dbReference type="EMBL" id="CP000255">
    <property type="protein sequence ID" value="ABD22878.1"/>
    <property type="molecule type" value="Genomic_DNA"/>
</dbReference>
<dbReference type="RefSeq" id="WP_000866415.1">
    <property type="nucleotide sequence ID" value="NZ_CP027476.1"/>
</dbReference>
<dbReference type="SMR" id="Q2FJ71"/>
<dbReference type="KEGG" id="saa:SAUSA300_0554"/>
<dbReference type="HOGENOM" id="CLU_049611_1_1_9"/>
<dbReference type="OMA" id="HVITQGI"/>
<dbReference type="UniPathway" id="UPA00629">
    <property type="reaction ID" value="UER00684"/>
</dbReference>
<dbReference type="Proteomes" id="UP000001939">
    <property type="component" value="Chromosome"/>
</dbReference>
<dbReference type="GO" id="GO:0005737">
    <property type="term" value="C:cytoplasm"/>
    <property type="evidence" value="ECO:0007669"/>
    <property type="project" value="TreeGrafter"/>
</dbReference>
<dbReference type="GO" id="GO:0004342">
    <property type="term" value="F:glucosamine-6-phosphate deaminase activity"/>
    <property type="evidence" value="ECO:0007669"/>
    <property type="project" value="UniProtKB-UniRule"/>
</dbReference>
<dbReference type="GO" id="GO:0042802">
    <property type="term" value="F:identical protein binding"/>
    <property type="evidence" value="ECO:0007669"/>
    <property type="project" value="TreeGrafter"/>
</dbReference>
<dbReference type="GO" id="GO:0005975">
    <property type="term" value="P:carbohydrate metabolic process"/>
    <property type="evidence" value="ECO:0007669"/>
    <property type="project" value="InterPro"/>
</dbReference>
<dbReference type="GO" id="GO:0006043">
    <property type="term" value="P:glucosamine catabolic process"/>
    <property type="evidence" value="ECO:0007669"/>
    <property type="project" value="TreeGrafter"/>
</dbReference>
<dbReference type="GO" id="GO:0006046">
    <property type="term" value="P:N-acetylglucosamine catabolic process"/>
    <property type="evidence" value="ECO:0007669"/>
    <property type="project" value="TreeGrafter"/>
</dbReference>
<dbReference type="GO" id="GO:0019262">
    <property type="term" value="P:N-acetylneuraminate catabolic process"/>
    <property type="evidence" value="ECO:0007669"/>
    <property type="project" value="UniProtKB-UniRule"/>
</dbReference>
<dbReference type="CDD" id="cd01399">
    <property type="entry name" value="GlcN6P_deaminase"/>
    <property type="match status" value="1"/>
</dbReference>
<dbReference type="FunFam" id="3.40.50.1360:FF:000003">
    <property type="entry name" value="Glucosamine-6-phosphate deaminase"/>
    <property type="match status" value="1"/>
</dbReference>
<dbReference type="Gene3D" id="3.40.50.1360">
    <property type="match status" value="1"/>
</dbReference>
<dbReference type="HAMAP" id="MF_01241">
    <property type="entry name" value="GlcN6P_deamin"/>
    <property type="match status" value="1"/>
</dbReference>
<dbReference type="InterPro" id="IPR006148">
    <property type="entry name" value="Glc/Gal-6P_isomerase"/>
</dbReference>
<dbReference type="InterPro" id="IPR004547">
    <property type="entry name" value="Glucosamine6P_isomerase"/>
</dbReference>
<dbReference type="InterPro" id="IPR018321">
    <property type="entry name" value="Glucosamine6P_isomerase_CS"/>
</dbReference>
<dbReference type="InterPro" id="IPR037171">
    <property type="entry name" value="NagB/RpiA_transferase-like"/>
</dbReference>
<dbReference type="NCBIfam" id="TIGR00502">
    <property type="entry name" value="nagB"/>
    <property type="match status" value="1"/>
</dbReference>
<dbReference type="PANTHER" id="PTHR11280">
    <property type="entry name" value="GLUCOSAMINE-6-PHOSPHATE ISOMERASE"/>
    <property type="match status" value="1"/>
</dbReference>
<dbReference type="PANTHER" id="PTHR11280:SF5">
    <property type="entry name" value="GLUCOSAMINE-6-PHOSPHATE ISOMERASE"/>
    <property type="match status" value="1"/>
</dbReference>
<dbReference type="Pfam" id="PF01182">
    <property type="entry name" value="Glucosamine_iso"/>
    <property type="match status" value="1"/>
</dbReference>
<dbReference type="SUPFAM" id="SSF100950">
    <property type="entry name" value="NagB/RpiA/CoA transferase-like"/>
    <property type="match status" value="1"/>
</dbReference>
<dbReference type="PROSITE" id="PS01161">
    <property type="entry name" value="GLC_GALNAC_ISOMERASE"/>
    <property type="match status" value="1"/>
</dbReference>
<proteinExistence type="inferred from homology"/>
<evidence type="ECO:0000255" key="1">
    <source>
        <dbReference type="HAMAP-Rule" id="MF_01241"/>
    </source>
</evidence>
<name>NAGB_STAA3</name>
<organism>
    <name type="scientific">Staphylococcus aureus (strain USA300)</name>
    <dbReference type="NCBI Taxonomy" id="367830"/>
    <lineage>
        <taxon>Bacteria</taxon>
        <taxon>Bacillati</taxon>
        <taxon>Bacillota</taxon>
        <taxon>Bacilli</taxon>
        <taxon>Bacillales</taxon>
        <taxon>Staphylococcaceae</taxon>
        <taxon>Staphylococcus</taxon>
    </lineage>
</organism>
<reference key="1">
    <citation type="journal article" date="2006" name="Lancet">
        <title>Complete genome sequence of USA300, an epidemic clone of community-acquired meticillin-resistant Staphylococcus aureus.</title>
        <authorList>
            <person name="Diep B.A."/>
            <person name="Gill S.R."/>
            <person name="Chang R.F."/>
            <person name="Phan T.H."/>
            <person name="Chen J.H."/>
            <person name="Davidson M.G."/>
            <person name="Lin F."/>
            <person name="Lin J."/>
            <person name="Carleton H.A."/>
            <person name="Mongodin E.F."/>
            <person name="Sensabaugh G.F."/>
            <person name="Perdreau-Remington F."/>
        </authorList>
    </citation>
    <scope>NUCLEOTIDE SEQUENCE [LARGE SCALE GENOMIC DNA]</scope>
    <source>
        <strain>USA300</strain>
    </source>
</reference>
<comment type="function">
    <text evidence="1">Catalyzes the reversible isomerization-deamination of glucosamine 6-phosphate (GlcN6P) to form fructose 6-phosphate (Fru6P) and ammonium ion.</text>
</comment>
<comment type="catalytic activity">
    <reaction evidence="1">
        <text>alpha-D-glucosamine 6-phosphate + H2O = beta-D-fructose 6-phosphate + NH4(+)</text>
        <dbReference type="Rhea" id="RHEA:12172"/>
        <dbReference type="ChEBI" id="CHEBI:15377"/>
        <dbReference type="ChEBI" id="CHEBI:28938"/>
        <dbReference type="ChEBI" id="CHEBI:57634"/>
        <dbReference type="ChEBI" id="CHEBI:75989"/>
        <dbReference type="EC" id="3.5.99.6"/>
    </reaction>
</comment>
<comment type="pathway">
    <text evidence="1">Amino-sugar metabolism; N-acetylneuraminate degradation; D-fructose 6-phosphate from N-acetylneuraminate: step 5/5.</text>
</comment>
<comment type="similarity">
    <text evidence="1">Belongs to the glucosamine/galactosamine-6-phosphate isomerase family. NagB subfamily.</text>
</comment>
<feature type="chain" id="PRO_1000067023" description="Glucosamine-6-phosphate deaminase">
    <location>
        <begin position="1"/>
        <end position="252"/>
    </location>
</feature>
<feature type="active site" description="Proton acceptor; for enolization step" evidence="1">
    <location>
        <position position="67"/>
    </location>
</feature>
<feature type="active site" description="For ring-opening step" evidence="1">
    <location>
        <position position="137"/>
    </location>
</feature>
<feature type="active site" description="Proton acceptor; for ring-opening step" evidence="1">
    <location>
        <position position="139"/>
    </location>
</feature>
<feature type="active site" description="For ring-opening step" evidence="1">
    <location>
        <position position="144"/>
    </location>
</feature>
<keyword id="KW-0119">Carbohydrate metabolism</keyword>
<keyword id="KW-0378">Hydrolase</keyword>
<accession>Q2FJ71</accession>
<protein>
    <recommendedName>
        <fullName evidence="1">Glucosamine-6-phosphate deaminase</fullName>
        <ecNumber evidence="1">3.5.99.6</ecNumber>
    </recommendedName>
    <alternativeName>
        <fullName evidence="1">GlcN6P deaminase</fullName>
        <shortName evidence="1">GNPDA</shortName>
    </alternativeName>
    <alternativeName>
        <fullName evidence="1">Glucosamine-6-phosphate isomerase</fullName>
    </alternativeName>
</protein>